<comment type="function">
    <text evidence="1">Catalyzes the sequential NAD-dependent oxidations of L-histidinol to L-histidinaldehyde and then to L-histidine.</text>
</comment>
<comment type="catalytic activity">
    <reaction evidence="1">
        <text>L-histidinol + 2 NAD(+) + H2O = L-histidine + 2 NADH + 3 H(+)</text>
        <dbReference type="Rhea" id="RHEA:20641"/>
        <dbReference type="ChEBI" id="CHEBI:15377"/>
        <dbReference type="ChEBI" id="CHEBI:15378"/>
        <dbReference type="ChEBI" id="CHEBI:57540"/>
        <dbReference type="ChEBI" id="CHEBI:57595"/>
        <dbReference type="ChEBI" id="CHEBI:57699"/>
        <dbReference type="ChEBI" id="CHEBI:57945"/>
        <dbReference type="EC" id="1.1.1.23"/>
    </reaction>
</comment>
<comment type="cofactor">
    <cofactor evidence="1">
        <name>Zn(2+)</name>
        <dbReference type="ChEBI" id="CHEBI:29105"/>
    </cofactor>
    <text evidence="1">Binds 1 zinc ion per subunit.</text>
</comment>
<comment type="pathway">
    <text evidence="1">Amino-acid biosynthesis; L-histidine biosynthesis; L-histidine from 5-phospho-alpha-D-ribose 1-diphosphate: step 9/9.</text>
</comment>
<comment type="subunit">
    <text evidence="1">Homodimer.</text>
</comment>
<comment type="similarity">
    <text evidence="1">Belongs to the histidinol dehydrogenase family.</text>
</comment>
<feature type="chain" id="PRO_0000135769" description="Histidinol dehydrogenase">
    <location>
        <begin position="1"/>
        <end position="442"/>
    </location>
</feature>
<feature type="active site" description="Proton acceptor" evidence="1">
    <location>
        <position position="334"/>
    </location>
</feature>
<feature type="active site" description="Proton acceptor" evidence="1">
    <location>
        <position position="335"/>
    </location>
</feature>
<feature type="binding site" evidence="1">
    <location>
        <position position="138"/>
    </location>
    <ligand>
        <name>NAD(+)</name>
        <dbReference type="ChEBI" id="CHEBI:57540"/>
    </ligand>
</feature>
<feature type="binding site" evidence="1">
    <location>
        <position position="196"/>
    </location>
    <ligand>
        <name>NAD(+)</name>
        <dbReference type="ChEBI" id="CHEBI:57540"/>
    </ligand>
</feature>
<feature type="binding site" evidence="1">
    <location>
        <position position="219"/>
    </location>
    <ligand>
        <name>NAD(+)</name>
        <dbReference type="ChEBI" id="CHEBI:57540"/>
    </ligand>
</feature>
<feature type="binding site" evidence="1">
    <location>
        <position position="245"/>
    </location>
    <ligand>
        <name>substrate</name>
    </ligand>
</feature>
<feature type="binding site" evidence="1">
    <location>
        <position position="267"/>
    </location>
    <ligand>
        <name>substrate</name>
    </ligand>
</feature>
<feature type="binding site" evidence="1">
    <location>
        <position position="267"/>
    </location>
    <ligand>
        <name>Zn(2+)</name>
        <dbReference type="ChEBI" id="CHEBI:29105"/>
    </ligand>
</feature>
<feature type="binding site" evidence="1">
    <location>
        <position position="270"/>
    </location>
    <ligand>
        <name>substrate</name>
    </ligand>
</feature>
<feature type="binding site" evidence="1">
    <location>
        <position position="270"/>
    </location>
    <ligand>
        <name>Zn(2+)</name>
        <dbReference type="ChEBI" id="CHEBI:29105"/>
    </ligand>
</feature>
<feature type="binding site" evidence="1">
    <location>
        <position position="335"/>
    </location>
    <ligand>
        <name>substrate</name>
    </ligand>
</feature>
<feature type="binding site" evidence="1">
    <location>
        <position position="368"/>
    </location>
    <ligand>
        <name>substrate</name>
    </ligand>
</feature>
<feature type="binding site" evidence="1">
    <location>
        <position position="368"/>
    </location>
    <ligand>
        <name>Zn(2+)</name>
        <dbReference type="ChEBI" id="CHEBI:29105"/>
    </ligand>
</feature>
<feature type="binding site" evidence="1">
    <location>
        <position position="422"/>
    </location>
    <ligand>
        <name>substrate</name>
    </ligand>
</feature>
<feature type="binding site" evidence="1">
    <location>
        <position position="427"/>
    </location>
    <ligand>
        <name>substrate</name>
    </ligand>
</feature>
<feature type="binding site" evidence="1">
    <location>
        <position position="427"/>
    </location>
    <ligand>
        <name>Zn(2+)</name>
        <dbReference type="ChEBI" id="CHEBI:29105"/>
    </ligand>
</feature>
<dbReference type="EC" id="1.1.1.23" evidence="1"/>
<dbReference type="EMBL" id="BX950851">
    <property type="protein sequence ID" value="CAG75482.1"/>
    <property type="molecule type" value="Genomic_DNA"/>
</dbReference>
<dbReference type="RefSeq" id="WP_011094128.1">
    <property type="nucleotide sequence ID" value="NC_004547.2"/>
</dbReference>
<dbReference type="SMR" id="Q6D411"/>
<dbReference type="STRING" id="218491.ECA2583"/>
<dbReference type="KEGG" id="eca:ECA2583"/>
<dbReference type="PATRIC" id="fig|218491.5.peg.2617"/>
<dbReference type="eggNOG" id="COG0141">
    <property type="taxonomic scope" value="Bacteria"/>
</dbReference>
<dbReference type="HOGENOM" id="CLU_006732_3_0_6"/>
<dbReference type="OrthoDB" id="9805269at2"/>
<dbReference type="UniPathway" id="UPA00031">
    <property type="reaction ID" value="UER00014"/>
</dbReference>
<dbReference type="Proteomes" id="UP000007966">
    <property type="component" value="Chromosome"/>
</dbReference>
<dbReference type="GO" id="GO:0005829">
    <property type="term" value="C:cytosol"/>
    <property type="evidence" value="ECO:0007669"/>
    <property type="project" value="TreeGrafter"/>
</dbReference>
<dbReference type="GO" id="GO:0004399">
    <property type="term" value="F:histidinol dehydrogenase activity"/>
    <property type="evidence" value="ECO:0007669"/>
    <property type="project" value="UniProtKB-UniRule"/>
</dbReference>
<dbReference type="GO" id="GO:0051287">
    <property type="term" value="F:NAD binding"/>
    <property type="evidence" value="ECO:0007669"/>
    <property type="project" value="InterPro"/>
</dbReference>
<dbReference type="GO" id="GO:0008270">
    <property type="term" value="F:zinc ion binding"/>
    <property type="evidence" value="ECO:0007669"/>
    <property type="project" value="UniProtKB-UniRule"/>
</dbReference>
<dbReference type="GO" id="GO:0000105">
    <property type="term" value="P:L-histidine biosynthetic process"/>
    <property type="evidence" value="ECO:0007669"/>
    <property type="project" value="UniProtKB-UniRule"/>
</dbReference>
<dbReference type="CDD" id="cd06572">
    <property type="entry name" value="Histidinol_dh"/>
    <property type="match status" value="1"/>
</dbReference>
<dbReference type="FunFam" id="1.20.5.1300:FF:000001">
    <property type="entry name" value="Histidine biosynthesis trifunctional protein"/>
    <property type="match status" value="1"/>
</dbReference>
<dbReference type="FunFam" id="3.40.50.1980:FF:000001">
    <property type="entry name" value="Histidinol dehydrogenase"/>
    <property type="match status" value="1"/>
</dbReference>
<dbReference type="Gene3D" id="1.20.5.1300">
    <property type="match status" value="1"/>
</dbReference>
<dbReference type="Gene3D" id="3.40.50.1980">
    <property type="entry name" value="Nitrogenase molybdenum iron protein domain"/>
    <property type="match status" value="2"/>
</dbReference>
<dbReference type="HAMAP" id="MF_01024">
    <property type="entry name" value="HisD"/>
    <property type="match status" value="1"/>
</dbReference>
<dbReference type="InterPro" id="IPR016161">
    <property type="entry name" value="Ald_DH/histidinol_DH"/>
</dbReference>
<dbReference type="InterPro" id="IPR001692">
    <property type="entry name" value="Histidinol_DH_CS"/>
</dbReference>
<dbReference type="InterPro" id="IPR022695">
    <property type="entry name" value="Histidinol_DH_monofunct"/>
</dbReference>
<dbReference type="InterPro" id="IPR012131">
    <property type="entry name" value="Hstdl_DH"/>
</dbReference>
<dbReference type="NCBIfam" id="TIGR00069">
    <property type="entry name" value="hisD"/>
    <property type="match status" value="1"/>
</dbReference>
<dbReference type="PANTHER" id="PTHR21256:SF2">
    <property type="entry name" value="HISTIDINE BIOSYNTHESIS TRIFUNCTIONAL PROTEIN"/>
    <property type="match status" value="1"/>
</dbReference>
<dbReference type="PANTHER" id="PTHR21256">
    <property type="entry name" value="HISTIDINOL DEHYDROGENASE HDH"/>
    <property type="match status" value="1"/>
</dbReference>
<dbReference type="Pfam" id="PF00815">
    <property type="entry name" value="Histidinol_dh"/>
    <property type="match status" value="1"/>
</dbReference>
<dbReference type="PIRSF" id="PIRSF000099">
    <property type="entry name" value="Histidinol_dh"/>
    <property type="match status" value="1"/>
</dbReference>
<dbReference type="PRINTS" id="PR00083">
    <property type="entry name" value="HOLDHDRGNASE"/>
</dbReference>
<dbReference type="SUPFAM" id="SSF53720">
    <property type="entry name" value="ALDH-like"/>
    <property type="match status" value="1"/>
</dbReference>
<dbReference type="PROSITE" id="PS00611">
    <property type="entry name" value="HISOL_DEHYDROGENASE"/>
    <property type="match status" value="1"/>
</dbReference>
<name>HISX_PECAS</name>
<accession>Q6D411</accession>
<gene>
    <name evidence="1" type="primary">hisD</name>
    <name type="ordered locus">ECA2583</name>
</gene>
<proteinExistence type="inferred from homology"/>
<reference key="1">
    <citation type="journal article" date="2004" name="Proc. Natl. Acad. Sci. U.S.A.">
        <title>Genome sequence of the enterobacterial phytopathogen Erwinia carotovora subsp. atroseptica and characterization of virulence factors.</title>
        <authorList>
            <person name="Bell K.S."/>
            <person name="Sebaihia M."/>
            <person name="Pritchard L."/>
            <person name="Holden M.T.G."/>
            <person name="Hyman L.J."/>
            <person name="Holeva M.C."/>
            <person name="Thomson N.R."/>
            <person name="Bentley S.D."/>
            <person name="Churcher L.J.C."/>
            <person name="Mungall K."/>
            <person name="Atkin R."/>
            <person name="Bason N."/>
            <person name="Brooks K."/>
            <person name="Chillingworth T."/>
            <person name="Clark K."/>
            <person name="Doggett J."/>
            <person name="Fraser A."/>
            <person name="Hance Z."/>
            <person name="Hauser H."/>
            <person name="Jagels K."/>
            <person name="Moule S."/>
            <person name="Norbertczak H."/>
            <person name="Ormond D."/>
            <person name="Price C."/>
            <person name="Quail M.A."/>
            <person name="Sanders M."/>
            <person name="Walker D."/>
            <person name="Whitehead S."/>
            <person name="Salmond G.P.C."/>
            <person name="Birch P.R.J."/>
            <person name="Parkhill J."/>
            <person name="Toth I.K."/>
        </authorList>
    </citation>
    <scope>NUCLEOTIDE SEQUENCE [LARGE SCALE GENOMIC DNA]</scope>
    <source>
        <strain>SCRI 1043 / ATCC BAA-672</strain>
    </source>
</reference>
<protein>
    <recommendedName>
        <fullName evidence="1">Histidinol dehydrogenase</fullName>
        <shortName evidence="1">HDH</shortName>
        <ecNumber evidence="1">1.1.1.23</ecNumber>
    </recommendedName>
</protein>
<sequence length="442" mass="46850">MADNTNSTGSFSTLVDWQRCSVEEQRQLLTRPAISASDRITAVVSDILTNVKSRGDGALRDYSAQFDKVQVDAIRITDAEIAAASARLGDEVKQAMAIAVRNIETFHNAQKLPIVDIETQPGVRCQQITRPIATVGLYIPGGSAPLPSTVLMLGTPSRIAGCRRVVLCSPPPIADEILYAAQLCGIKEVFQLGGAQAIAAMAFGTDSVPKVDKIFGPGNAYVTEAKRQVSQQLDGAAIDMPAGPSEVLVIADSGATPAFVASDLLSQAEHGPDSQVILLTPDAVMAKAVADAVEEQLTQLSRADIARQALASSRVIVARDLAQCIEISNQYGPEHLIIQTRDAESLVDSITSAGSVFLGDWSPESAGDYASGTNHVLPTYGYTSTYSSLGLADFQKRMTVQQLTPQGLLQLAPTIEILAQAEQLTAHKNAVTLRVAALKEQA</sequence>
<organism>
    <name type="scientific">Pectobacterium atrosepticum (strain SCRI 1043 / ATCC BAA-672)</name>
    <name type="common">Erwinia carotovora subsp. atroseptica</name>
    <dbReference type="NCBI Taxonomy" id="218491"/>
    <lineage>
        <taxon>Bacteria</taxon>
        <taxon>Pseudomonadati</taxon>
        <taxon>Pseudomonadota</taxon>
        <taxon>Gammaproteobacteria</taxon>
        <taxon>Enterobacterales</taxon>
        <taxon>Pectobacteriaceae</taxon>
        <taxon>Pectobacterium</taxon>
    </lineage>
</organism>
<evidence type="ECO:0000255" key="1">
    <source>
        <dbReference type="HAMAP-Rule" id="MF_01024"/>
    </source>
</evidence>
<keyword id="KW-0028">Amino-acid biosynthesis</keyword>
<keyword id="KW-0368">Histidine biosynthesis</keyword>
<keyword id="KW-0479">Metal-binding</keyword>
<keyword id="KW-0520">NAD</keyword>
<keyword id="KW-0560">Oxidoreductase</keyword>
<keyword id="KW-1185">Reference proteome</keyword>
<keyword id="KW-0862">Zinc</keyword>